<name>TREF_ECO55</name>
<feature type="chain" id="PRO_1000149680" description="Cytoplasmic trehalase">
    <location>
        <begin position="1"/>
        <end position="549"/>
    </location>
</feature>
<feature type="active site" description="Proton donor/acceptor" evidence="1">
    <location>
        <position position="326"/>
    </location>
</feature>
<feature type="active site" description="Proton donor/acceptor" evidence="1">
    <location>
        <position position="509"/>
    </location>
</feature>
<feature type="binding site" evidence="1">
    <location>
        <position position="168"/>
    </location>
    <ligand>
        <name>substrate</name>
    </ligand>
</feature>
<feature type="binding site" evidence="1">
    <location>
        <begin position="175"/>
        <end position="176"/>
    </location>
    <ligand>
        <name>substrate</name>
    </ligand>
</feature>
<feature type="binding site" evidence="1">
    <location>
        <position position="212"/>
    </location>
    <ligand>
        <name>substrate</name>
    </ligand>
</feature>
<feature type="binding site" evidence="1">
    <location>
        <begin position="221"/>
        <end position="223"/>
    </location>
    <ligand>
        <name>substrate</name>
    </ligand>
</feature>
<feature type="binding site" evidence="1">
    <location>
        <begin position="292"/>
        <end position="294"/>
    </location>
    <ligand>
        <name>substrate</name>
    </ligand>
</feature>
<feature type="binding site" evidence="1">
    <location>
        <position position="324"/>
    </location>
    <ligand>
        <name>substrate</name>
    </ligand>
</feature>
<feature type="binding site" evidence="1">
    <location>
        <position position="525"/>
    </location>
    <ligand>
        <name>substrate</name>
    </ligand>
</feature>
<accession>B7L603</accession>
<sequence>MLNQKIQNPNPDELMIEVDLCYELDPYELKLDEMIEAEPEPEMIEGLPASDALTPADRYLELFEHVQSAKIFPDSKTFPDCAPKMDPLDILIRYRKVRRHRDFDLRKFVENHFWLPEVYSREYVSDPQNSLKEHIDQLWPVLTREPQDHIPWSSLLALPQSYIVPGGRFSETYYWDSYFTMLGLAESGREDLLKCMADNFAWMIENYGHIPNGNRTYYLSRSQPPVFALMVELFEEDGVRGARRYLDHLKMEYAFWMDGAESLIPNQAYRHVVRMPDGSLLNRYWDDRDTPRDESWLEDVETAKHSGRPPNEVYRDLRAGAASGWDYSSRWLRDTGRLASIRTTQFIPIDLNAFLFKLESAIANISALKGEKETEALFRQKASARRDAVNRYLWDDENGIYRDYDWRREQLALFSAAAIVPLYVGMANHEQADRLANAVRSRLLTPGGILASEYETGEQWDKPNGWAPLQWMAIQGFKMYGDDLLGDEIARSWLKTVNQFYLEQHKMIEKYHIADGVPREGGGGEYPLQDGFGWTNGVVRRLIGLYGEP</sequence>
<comment type="function">
    <text evidence="1">Hydrolyzes trehalose to glucose. Could be involved, in cells returning to low osmolarity conditions, in the utilization of the accumulated cytoplasmic trehalose, which was synthesized in response to high osmolarity.</text>
</comment>
<comment type="catalytic activity">
    <reaction evidence="1">
        <text>alpha,alpha-trehalose + H2O = alpha-D-glucose + beta-D-glucose</text>
        <dbReference type="Rhea" id="RHEA:32675"/>
        <dbReference type="ChEBI" id="CHEBI:15377"/>
        <dbReference type="ChEBI" id="CHEBI:15903"/>
        <dbReference type="ChEBI" id="CHEBI:16551"/>
        <dbReference type="ChEBI" id="CHEBI:17925"/>
        <dbReference type="EC" id="3.2.1.28"/>
    </reaction>
</comment>
<comment type="pathway">
    <text evidence="1">Glycan degradation; trehalose degradation; D-glucose from alpha,alpha-trehalose: step 1/1.</text>
</comment>
<comment type="subunit">
    <text evidence="1">Monomer.</text>
</comment>
<comment type="subcellular location">
    <subcellularLocation>
        <location evidence="1">Cytoplasm</location>
    </subcellularLocation>
</comment>
<comment type="similarity">
    <text evidence="1">Belongs to the glycosyl hydrolase 37 family.</text>
</comment>
<organism>
    <name type="scientific">Escherichia coli (strain 55989 / EAEC)</name>
    <dbReference type="NCBI Taxonomy" id="585055"/>
    <lineage>
        <taxon>Bacteria</taxon>
        <taxon>Pseudomonadati</taxon>
        <taxon>Pseudomonadota</taxon>
        <taxon>Gammaproteobacteria</taxon>
        <taxon>Enterobacterales</taxon>
        <taxon>Enterobacteriaceae</taxon>
        <taxon>Escherichia</taxon>
    </lineage>
</organism>
<proteinExistence type="inferred from homology"/>
<reference key="1">
    <citation type="journal article" date="2009" name="PLoS Genet.">
        <title>Organised genome dynamics in the Escherichia coli species results in highly diverse adaptive paths.</title>
        <authorList>
            <person name="Touchon M."/>
            <person name="Hoede C."/>
            <person name="Tenaillon O."/>
            <person name="Barbe V."/>
            <person name="Baeriswyl S."/>
            <person name="Bidet P."/>
            <person name="Bingen E."/>
            <person name="Bonacorsi S."/>
            <person name="Bouchier C."/>
            <person name="Bouvet O."/>
            <person name="Calteau A."/>
            <person name="Chiapello H."/>
            <person name="Clermont O."/>
            <person name="Cruveiller S."/>
            <person name="Danchin A."/>
            <person name="Diard M."/>
            <person name="Dossat C."/>
            <person name="Karoui M.E."/>
            <person name="Frapy E."/>
            <person name="Garry L."/>
            <person name="Ghigo J.M."/>
            <person name="Gilles A.M."/>
            <person name="Johnson J."/>
            <person name="Le Bouguenec C."/>
            <person name="Lescat M."/>
            <person name="Mangenot S."/>
            <person name="Martinez-Jehanne V."/>
            <person name="Matic I."/>
            <person name="Nassif X."/>
            <person name="Oztas S."/>
            <person name="Petit M.A."/>
            <person name="Pichon C."/>
            <person name="Rouy Z."/>
            <person name="Ruf C.S."/>
            <person name="Schneider D."/>
            <person name="Tourret J."/>
            <person name="Vacherie B."/>
            <person name="Vallenet D."/>
            <person name="Medigue C."/>
            <person name="Rocha E.P.C."/>
            <person name="Denamur E."/>
        </authorList>
    </citation>
    <scope>NUCLEOTIDE SEQUENCE [LARGE SCALE GENOMIC DNA]</scope>
    <source>
        <strain>55989 / EAEC</strain>
    </source>
</reference>
<gene>
    <name evidence="1" type="primary">treF</name>
    <name type="ordered locus">EC55989_3964</name>
</gene>
<evidence type="ECO:0000255" key="1">
    <source>
        <dbReference type="HAMAP-Rule" id="MF_01059"/>
    </source>
</evidence>
<protein>
    <recommendedName>
        <fullName evidence="1">Cytoplasmic trehalase</fullName>
        <ecNumber evidence="1">3.2.1.28</ecNumber>
    </recommendedName>
    <alternativeName>
        <fullName evidence="1">Alpha,alpha-trehalase</fullName>
    </alternativeName>
    <alternativeName>
        <fullName evidence="1">Alpha,alpha-trehalose glucohydrolase</fullName>
    </alternativeName>
</protein>
<keyword id="KW-0963">Cytoplasm</keyword>
<keyword id="KW-0326">Glycosidase</keyword>
<keyword id="KW-0378">Hydrolase</keyword>
<keyword id="KW-1185">Reference proteome</keyword>
<dbReference type="EC" id="3.2.1.28" evidence="1"/>
<dbReference type="EMBL" id="CU928145">
    <property type="protein sequence ID" value="CAV00416.1"/>
    <property type="molecule type" value="Genomic_DNA"/>
</dbReference>
<dbReference type="RefSeq" id="WP_000934203.1">
    <property type="nucleotide sequence ID" value="NC_011748.1"/>
</dbReference>
<dbReference type="SMR" id="B7L603"/>
<dbReference type="CAZy" id="GH37">
    <property type="family name" value="Glycoside Hydrolase Family 37"/>
</dbReference>
<dbReference type="KEGG" id="eck:EC55989_3964"/>
<dbReference type="HOGENOM" id="CLU_006451_3_1_6"/>
<dbReference type="UniPathway" id="UPA00300">
    <property type="reaction ID" value="UER00535"/>
</dbReference>
<dbReference type="Proteomes" id="UP000000746">
    <property type="component" value="Chromosome"/>
</dbReference>
<dbReference type="GO" id="GO:0005737">
    <property type="term" value="C:cytoplasm"/>
    <property type="evidence" value="ECO:0007669"/>
    <property type="project" value="UniProtKB-SubCell"/>
</dbReference>
<dbReference type="GO" id="GO:0004555">
    <property type="term" value="F:alpha,alpha-trehalase activity"/>
    <property type="evidence" value="ECO:0007669"/>
    <property type="project" value="UniProtKB-UniRule"/>
</dbReference>
<dbReference type="GO" id="GO:0071474">
    <property type="term" value="P:cellular hyperosmotic response"/>
    <property type="evidence" value="ECO:0007669"/>
    <property type="project" value="InterPro"/>
</dbReference>
<dbReference type="GO" id="GO:0005993">
    <property type="term" value="P:trehalose catabolic process"/>
    <property type="evidence" value="ECO:0007669"/>
    <property type="project" value="UniProtKB-UniRule"/>
</dbReference>
<dbReference type="FunFam" id="1.50.10.10:FF:000003">
    <property type="entry name" value="Cytoplasmic trehalase"/>
    <property type="match status" value="1"/>
</dbReference>
<dbReference type="Gene3D" id="1.50.10.10">
    <property type="match status" value="1"/>
</dbReference>
<dbReference type="HAMAP" id="MF_01059">
    <property type="entry name" value="Cyt_trehalase"/>
    <property type="match status" value="1"/>
</dbReference>
<dbReference type="InterPro" id="IPR008928">
    <property type="entry name" value="6-hairpin_glycosidase_sf"/>
</dbReference>
<dbReference type="InterPro" id="IPR012341">
    <property type="entry name" value="6hp_glycosidase-like_sf"/>
</dbReference>
<dbReference type="InterPro" id="IPR023715">
    <property type="entry name" value="Cyt_trehalase"/>
</dbReference>
<dbReference type="InterPro" id="IPR001661">
    <property type="entry name" value="Glyco_hydro_37"/>
</dbReference>
<dbReference type="InterPro" id="IPR018232">
    <property type="entry name" value="Glyco_hydro_37_CS"/>
</dbReference>
<dbReference type="NCBIfam" id="NF009773">
    <property type="entry name" value="PRK13270.1"/>
    <property type="match status" value="1"/>
</dbReference>
<dbReference type="NCBIfam" id="NF009774">
    <property type="entry name" value="PRK13271.1"/>
    <property type="match status" value="1"/>
</dbReference>
<dbReference type="PANTHER" id="PTHR23403:SF8">
    <property type="entry name" value="CYTOPLASMIC TREHALASE"/>
    <property type="match status" value="1"/>
</dbReference>
<dbReference type="PANTHER" id="PTHR23403">
    <property type="entry name" value="TREHALASE"/>
    <property type="match status" value="1"/>
</dbReference>
<dbReference type="Pfam" id="PF01204">
    <property type="entry name" value="Trehalase"/>
    <property type="match status" value="1"/>
</dbReference>
<dbReference type="PRINTS" id="PR00744">
    <property type="entry name" value="GLHYDRLASE37"/>
</dbReference>
<dbReference type="SUPFAM" id="SSF48208">
    <property type="entry name" value="Six-hairpin glycosidases"/>
    <property type="match status" value="1"/>
</dbReference>
<dbReference type="PROSITE" id="PS00927">
    <property type="entry name" value="TREHALASE_1"/>
    <property type="match status" value="1"/>
</dbReference>
<dbReference type="PROSITE" id="PS00928">
    <property type="entry name" value="TREHALASE_2"/>
    <property type="match status" value="1"/>
</dbReference>